<keyword id="KW-0997">Cell inner membrane</keyword>
<keyword id="KW-1003">Cell membrane</keyword>
<keyword id="KW-0407">Ion channel</keyword>
<keyword id="KW-0406">Ion transport</keyword>
<keyword id="KW-0472">Membrane</keyword>
<keyword id="KW-0479">Metal-binding</keyword>
<keyword id="KW-0915">Sodium</keyword>
<keyword id="KW-0812">Transmembrane</keyword>
<keyword id="KW-1133">Transmembrane helix</keyword>
<keyword id="KW-0813">Transport</keyword>
<sequence length="127" mass="13849">MLQLLLAVFIGGGTGSVARWMLSMRFNPLHQAIPIGTLTANLLGAFIIGMGFAWFNRMTHIDPMWKVLITTGFCGGLTTFSTFSAEVVFLLQEGRFGWALLNVLINLLGSFAMTALAFWLFSAAAAR</sequence>
<organism>
    <name type="scientific">Salmonella typhi</name>
    <dbReference type="NCBI Taxonomy" id="90370"/>
    <lineage>
        <taxon>Bacteria</taxon>
        <taxon>Pseudomonadati</taxon>
        <taxon>Pseudomonadota</taxon>
        <taxon>Gammaproteobacteria</taxon>
        <taxon>Enterobacterales</taxon>
        <taxon>Enterobacteriaceae</taxon>
        <taxon>Salmonella</taxon>
    </lineage>
</organism>
<gene>
    <name evidence="1" type="primary">fluC</name>
    <name evidence="1" type="synonym">crcB</name>
    <name type="ordered locus">STY0679</name>
    <name type="ordered locus">t2237</name>
</gene>
<name>FLUC_SALTI</name>
<proteinExistence type="inferred from homology"/>
<feature type="chain" id="PRO_0000110168" description="Fluoride-specific ion channel FluC">
    <location>
        <begin position="1"/>
        <end position="127"/>
    </location>
</feature>
<feature type="transmembrane region" description="Helical" evidence="1">
    <location>
        <begin position="4"/>
        <end position="24"/>
    </location>
</feature>
<feature type="transmembrane region" description="Helical" evidence="1">
    <location>
        <begin position="35"/>
        <end position="55"/>
    </location>
</feature>
<feature type="transmembrane region" description="Helical" evidence="1">
    <location>
        <begin position="71"/>
        <end position="91"/>
    </location>
</feature>
<feature type="transmembrane region" description="Helical" evidence="1">
    <location>
        <begin position="103"/>
        <end position="123"/>
    </location>
</feature>
<feature type="binding site" evidence="1">
    <location>
        <position position="75"/>
    </location>
    <ligand>
        <name>Na(+)</name>
        <dbReference type="ChEBI" id="CHEBI:29101"/>
        <note>structural</note>
    </ligand>
</feature>
<feature type="binding site" evidence="1">
    <location>
        <position position="78"/>
    </location>
    <ligand>
        <name>Na(+)</name>
        <dbReference type="ChEBI" id="CHEBI:29101"/>
        <note>structural</note>
    </ligand>
</feature>
<comment type="function">
    <text evidence="1">Fluoride-specific ion channel. Important for reducing fluoride concentration in the cell, thus reducing its toxicity.</text>
</comment>
<comment type="catalytic activity">
    <reaction evidence="1">
        <text>fluoride(in) = fluoride(out)</text>
        <dbReference type="Rhea" id="RHEA:76159"/>
        <dbReference type="ChEBI" id="CHEBI:17051"/>
    </reaction>
    <physiologicalReaction direction="left-to-right" evidence="1">
        <dbReference type="Rhea" id="RHEA:76160"/>
    </physiologicalReaction>
</comment>
<comment type="activity regulation">
    <text evidence="1">Na(+) is not transported, but it plays an essential structural role and its presence is essential for fluoride channel function.</text>
</comment>
<comment type="subcellular location">
    <subcellularLocation>
        <location evidence="1">Cell inner membrane</location>
        <topology evidence="1">Multi-pass membrane protein</topology>
    </subcellularLocation>
</comment>
<comment type="similarity">
    <text evidence="1">Belongs to the fluoride channel Fluc/FEX (TC 1.A.43) family.</text>
</comment>
<protein>
    <recommendedName>
        <fullName evidence="1">Fluoride-specific ion channel FluC</fullName>
    </recommendedName>
</protein>
<dbReference type="EMBL" id="AL513382">
    <property type="protein sequence ID" value="CAD05107.1"/>
    <property type="molecule type" value="Genomic_DNA"/>
</dbReference>
<dbReference type="EMBL" id="AE014613">
    <property type="protein sequence ID" value="AAO69839.1"/>
    <property type="molecule type" value="Genomic_DNA"/>
</dbReference>
<dbReference type="RefSeq" id="NP_455207.1">
    <property type="nucleotide sequence ID" value="NC_003198.1"/>
</dbReference>
<dbReference type="RefSeq" id="WP_000939753.1">
    <property type="nucleotide sequence ID" value="NZ_WSUR01000015.1"/>
</dbReference>
<dbReference type="SMR" id="P63867"/>
<dbReference type="STRING" id="220341.gene:17584688"/>
<dbReference type="KEGG" id="stt:t2237"/>
<dbReference type="KEGG" id="sty:STY0679"/>
<dbReference type="PATRIC" id="fig|220341.7.peg.682"/>
<dbReference type="eggNOG" id="COG0239">
    <property type="taxonomic scope" value="Bacteria"/>
</dbReference>
<dbReference type="HOGENOM" id="CLU_114342_3_3_6"/>
<dbReference type="OMA" id="NDKWLNG"/>
<dbReference type="OrthoDB" id="9806299at2"/>
<dbReference type="Proteomes" id="UP000000541">
    <property type="component" value="Chromosome"/>
</dbReference>
<dbReference type="Proteomes" id="UP000002670">
    <property type="component" value="Chromosome"/>
</dbReference>
<dbReference type="GO" id="GO:0005886">
    <property type="term" value="C:plasma membrane"/>
    <property type="evidence" value="ECO:0007669"/>
    <property type="project" value="UniProtKB-SubCell"/>
</dbReference>
<dbReference type="GO" id="GO:0062054">
    <property type="term" value="F:fluoride channel activity"/>
    <property type="evidence" value="ECO:0007669"/>
    <property type="project" value="UniProtKB-UniRule"/>
</dbReference>
<dbReference type="GO" id="GO:0046872">
    <property type="term" value="F:metal ion binding"/>
    <property type="evidence" value="ECO:0007669"/>
    <property type="project" value="UniProtKB-KW"/>
</dbReference>
<dbReference type="GO" id="GO:0140114">
    <property type="term" value="P:cellular detoxification of fluoride"/>
    <property type="evidence" value="ECO:0007669"/>
    <property type="project" value="UniProtKB-UniRule"/>
</dbReference>
<dbReference type="HAMAP" id="MF_00454">
    <property type="entry name" value="FluC"/>
    <property type="match status" value="1"/>
</dbReference>
<dbReference type="InterPro" id="IPR003691">
    <property type="entry name" value="FluC"/>
</dbReference>
<dbReference type="NCBIfam" id="TIGR00494">
    <property type="entry name" value="crcB"/>
    <property type="match status" value="1"/>
</dbReference>
<dbReference type="NCBIfam" id="NF010792">
    <property type="entry name" value="PRK14196.1"/>
    <property type="match status" value="1"/>
</dbReference>
<dbReference type="PANTHER" id="PTHR28259">
    <property type="entry name" value="FLUORIDE EXPORT PROTEIN 1-RELATED"/>
    <property type="match status" value="1"/>
</dbReference>
<dbReference type="PANTHER" id="PTHR28259:SF1">
    <property type="entry name" value="FLUORIDE EXPORT PROTEIN 1-RELATED"/>
    <property type="match status" value="1"/>
</dbReference>
<dbReference type="Pfam" id="PF02537">
    <property type="entry name" value="CRCB"/>
    <property type="match status" value="1"/>
</dbReference>
<accession>P63867</accession>
<accession>Q8XGH9</accession>
<reference key="1">
    <citation type="journal article" date="2001" name="Nature">
        <title>Complete genome sequence of a multiple drug resistant Salmonella enterica serovar Typhi CT18.</title>
        <authorList>
            <person name="Parkhill J."/>
            <person name="Dougan G."/>
            <person name="James K.D."/>
            <person name="Thomson N.R."/>
            <person name="Pickard D."/>
            <person name="Wain J."/>
            <person name="Churcher C.M."/>
            <person name="Mungall K.L."/>
            <person name="Bentley S.D."/>
            <person name="Holden M.T.G."/>
            <person name="Sebaihia M."/>
            <person name="Baker S."/>
            <person name="Basham D."/>
            <person name="Brooks K."/>
            <person name="Chillingworth T."/>
            <person name="Connerton P."/>
            <person name="Cronin A."/>
            <person name="Davis P."/>
            <person name="Davies R.M."/>
            <person name="Dowd L."/>
            <person name="White N."/>
            <person name="Farrar J."/>
            <person name="Feltwell T."/>
            <person name="Hamlin N."/>
            <person name="Haque A."/>
            <person name="Hien T.T."/>
            <person name="Holroyd S."/>
            <person name="Jagels K."/>
            <person name="Krogh A."/>
            <person name="Larsen T.S."/>
            <person name="Leather S."/>
            <person name="Moule S."/>
            <person name="O'Gaora P."/>
            <person name="Parry C."/>
            <person name="Quail M.A."/>
            <person name="Rutherford K.M."/>
            <person name="Simmonds M."/>
            <person name="Skelton J."/>
            <person name="Stevens K."/>
            <person name="Whitehead S."/>
            <person name="Barrell B.G."/>
        </authorList>
    </citation>
    <scope>NUCLEOTIDE SEQUENCE [LARGE SCALE GENOMIC DNA]</scope>
    <source>
        <strain>CT18</strain>
    </source>
</reference>
<reference key="2">
    <citation type="journal article" date="2003" name="J. Bacteriol.">
        <title>Comparative genomics of Salmonella enterica serovar Typhi strains Ty2 and CT18.</title>
        <authorList>
            <person name="Deng W."/>
            <person name="Liou S.-R."/>
            <person name="Plunkett G. III"/>
            <person name="Mayhew G.F."/>
            <person name="Rose D.J."/>
            <person name="Burland V."/>
            <person name="Kodoyianni V."/>
            <person name="Schwartz D.C."/>
            <person name="Blattner F.R."/>
        </authorList>
    </citation>
    <scope>NUCLEOTIDE SEQUENCE [LARGE SCALE GENOMIC DNA]</scope>
    <source>
        <strain>ATCC 700931 / Ty2</strain>
    </source>
</reference>
<evidence type="ECO:0000255" key="1">
    <source>
        <dbReference type="HAMAP-Rule" id="MF_00454"/>
    </source>
</evidence>